<protein>
    <recommendedName>
        <fullName evidence="1 3">Rhamnulokinase</fullName>
        <ecNumber evidence="1 2">2.7.1.5</ecNumber>
    </recommendedName>
    <alternativeName>
        <fullName evidence="1 3">Rhamnulose kinase</fullName>
    </alternativeName>
</protein>
<feature type="chain" id="PRO_0000297519" description="Rhamnulokinase">
    <location>
        <begin position="1"/>
        <end position="489"/>
    </location>
</feature>
<feature type="active site" description="Proton acceptor" evidence="1 2">
    <location>
        <position position="237"/>
    </location>
</feature>
<feature type="binding site" evidence="1 2">
    <location>
        <begin position="13"/>
        <end position="17"/>
    </location>
    <ligand>
        <name>ATP</name>
        <dbReference type="ChEBI" id="CHEBI:30616"/>
    </ligand>
</feature>
<feature type="binding site" evidence="1 2">
    <location>
        <position position="83"/>
    </location>
    <ligand>
        <name>substrate</name>
    </ligand>
</feature>
<feature type="binding site" evidence="1 2">
    <location>
        <begin position="236"/>
        <end position="238"/>
    </location>
    <ligand>
        <name>substrate</name>
    </ligand>
</feature>
<feature type="binding site" evidence="1 2">
    <location>
        <position position="259"/>
    </location>
    <ligand>
        <name>ATP</name>
        <dbReference type="ChEBI" id="CHEBI:30616"/>
    </ligand>
</feature>
<feature type="binding site" evidence="1 2">
    <location>
        <position position="296"/>
    </location>
    <ligand>
        <name>substrate</name>
    </ligand>
</feature>
<feature type="binding site" evidence="1 2">
    <location>
        <position position="304"/>
    </location>
    <ligand>
        <name>ATP</name>
        <dbReference type="ChEBI" id="CHEBI:30616"/>
    </ligand>
</feature>
<feature type="binding site" evidence="1 2">
    <location>
        <position position="402"/>
    </location>
    <ligand>
        <name>ATP</name>
        <dbReference type="ChEBI" id="CHEBI:30616"/>
    </ligand>
</feature>
<feature type="disulfide bond" evidence="1">
    <location>
        <begin position="68"/>
        <end position="222"/>
    </location>
</feature>
<feature type="disulfide bond" evidence="1">
    <location>
        <begin position="353"/>
        <end position="370"/>
    </location>
</feature>
<feature type="disulfide bond" evidence="1">
    <location>
        <begin position="413"/>
        <end position="417"/>
    </location>
</feature>
<feature type="strand" evidence="4">
    <location>
        <begin position="4"/>
        <end position="11"/>
    </location>
</feature>
<feature type="strand" evidence="4">
    <location>
        <begin position="13"/>
        <end position="24"/>
    </location>
</feature>
<feature type="helix" evidence="4">
    <location>
        <begin position="25"/>
        <end position="27"/>
    </location>
</feature>
<feature type="strand" evidence="4">
    <location>
        <begin position="29"/>
        <end position="39"/>
    </location>
</feature>
<feature type="strand" evidence="4">
    <location>
        <begin position="43"/>
        <end position="45"/>
    </location>
</feature>
<feature type="strand" evidence="4">
    <location>
        <begin position="48"/>
        <end position="50"/>
    </location>
</feature>
<feature type="helix" evidence="4">
    <location>
        <begin position="53"/>
        <end position="69"/>
    </location>
</feature>
<feature type="strand" evidence="4">
    <location>
        <begin position="76"/>
        <end position="81"/>
    </location>
</feature>
<feature type="strand" evidence="4">
    <location>
        <begin position="86"/>
        <end position="89"/>
    </location>
</feature>
<feature type="strand" evidence="4">
    <location>
        <begin position="95"/>
        <end position="97"/>
    </location>
</feature>
<feature type="helix" evidence="4">
    <location>
        <begin position="105"/>
        <end position="107"/>
    </location>
</feature>
<feature type="helix" evidence="4">
    <location>
        <begin position="110"/>
        <end position="118"/>
    </location>
</feature>
<feature type="helix" evidence="4">
    <location>
        <begin position="120"/>
        <end position="127"/>
    </location>
</feature>
<feature type="helix" evidence="4">
    <location>
        <begin position="136"/>
        <end position="146"/>
    </location>
</feature>
<feature type="helix" evidence="4">
    <location>
        <begin position="148"/>
        <end position="153"/>
    </location>
</feature>
<feature type="strand" evidence="4">
    <location>
        <begin position="156"/>
        <end position="159"/>
    </location>
</feature>
<feature type="helix" evidence="4">
    <location>
        <begin position="160"/>
        <end position="169"/>
    </location>
</feature>
<feature type="helix" evidence="4">
    <location>
        <begin position="176"/>
        <end position="179"/>
    </location>
</feature>
<feature type="helix" evidence="4">
    <location>
        <begin position="180"/>
        <end position="182"/>
    </location>
</feature>
<feature type="turn" evidence="4">
    <location>
        <begin position="187"/>
        <end position="189"/>
    </location>
</feature>
<feature type="strand" evidence="4">
    <location>
        <begin position="190"/>
        <end position="192"/>
    </location>
</feature>
<feature type="helix" evidence="4">
    <location>
        <begin position="194"/>
        <end position="200"/>
    </location>
</feature>
<feature type="helix" evidence="4">
    <location>
        <begin position="204"/>
        <end position="206"/>
    </location>
</feature>
<feature type="strand" evidence="4">
    <location>
        <begin position="216"/>
        <end position="221"/>
    </location>
</feature>
<feature type="strand" evidence="4">
    <location>
        <begin position="227"/>
        <end position="231"/>
    </location>
</feature>
<feature type="helix" evidence="4">
    <location>
        <begin position="237"/>
        <end position="244"/>
    </location>
</feature>
<feature type="strand" evidence="4">
    <location>
        <begin position="252"/>
        <end position="269"/>
    </location>
</feature>
<feature type="helix" evidence="4">
    <location>
        <begin position="274"/>
        <end position="279"/>
    </location>
</feature>
<feature type="strand" evidence="4">
    <location>
        <begin position="282"/>
        <end position="284"/>
    </location>
</feature>
<feature type="helix" evidence="4">
    <location>
        <begin position="287"/>
        <end position="289"/>
    </location>
</feature>
<feature type="strand" evidence="4">
    <location>
        <begin position="291"/>
        <end position="297"/>
    </location>
</feature>
<feature type="helix" evidence="4">
    <location>
        <begin position="301"/>
        <end position="309"/>
    </location>
</feature>
<feature type="helix" evidence="4">
    <location>
        <begin position="315"/>
        <end position="322"/>
    </location>
</feature>
<feature type="strand" evidence="4">
    <location>
        <begin position="327"/>
        <end position="330"/>
    </location>
</feature>
<feature type="helix" evidence="4">
    <location>
        <begin position="337"/>
        <end position="339"/>
    </location>
</feature>
<feature type="helix" evidence="4">
    <location>
        <begin position="345"/>
        <end position="355"/>
    </location>
</feature>
<feature type="helix" evidence="4">
    <location>
        <begin position="364"/>
        <end position="390"/>
    </location>
</feature>
<feature type="strand" evidence="4">
    <location>
        <begin position="395"/>
        <end position="401"/>
    </location>
</feature>
<feature type="helix" evidence="4">
    <location>
        <begin position="402"/>
        <end position="405"/>
    </location>
</feature>
<feature type="helix" evidence="4">
    <location>
        <begin position="407"/>
        <end position="417"/>
    </location>
</feature>
<feature type="strand" evidence="4">
    <location>
        <begin position="419"/>
        <end position="423"/>
    </location>
</feature>
<feature type="helix" evidence="4">
    <location>
        <begin position="428"/>
        <end position="440"/>
    </location>
</feature>
<feature type="helix" evidence="4">
    <location>
        <begin position="447"/>
        <end position="457"/>
    </location>
</feature>
<feature type="strand" evidence="4">
    <location>
        <begin position="461"/>
        <end position="463"/>
    </location>
</feature>
<feature type="helix" evidence="4">
    <location>
        <begin position="470"/>
        <end position="477"/>
    </location>
</feature>
<gene>
    <name evidence="1 3" type="primary">rhaB</name>
    <name type="ordered locus">UTI89_C4487</name>
</gene>
<keyword id="KW-0002">3D-structure</keyword>
<keyword id="KW-0067">ATP-binding</keyword>
<keyword id="KW-1015">Disulfide bond</keyword>
<keyword id="KW-0418">Kinase</keyword>
<keyword id="KW-0460">Magnesium</keyword>
<keyword id="KW-0547">Nucleotide-binding</keyword>
<keyword id="KW-0684">Rhamnose metabolism</keyword>
<keyword id="KW-0808">Transferase</keyword>
<reference key="1">
    <citation type="journal article" date="2006" name="Proc. Natl. Acad. Sci. U.S.A.">
        <title>Identification of genes subject to positive selection in uropathogenic strains of Escherichia coli: a comparative genomics approach.</title>
        <authorList>
            <person name="Chen S.L."/>
            <person name="Hung C.-S."/>
            <person name="Xu J."/>
            <person name="Reigstad C.S."/>
            <person name="Magrini V."/>
            <person name="Sabo A."/>
            <person name="Blasiar D."/>
            <person name="Bieri T."/>
            <person name="Meyer R.R."/>
            <person name="Ozersky P."/>
            <person name="Armstrong J.R."/>
            <person name="Fulton R.S."/>
            <person name="Latreille J.P."/>
            <person name="Spieth J."/>
            <person name="Hooton T.M."/>
            <person name="Mardis E.R."/>
            <person name="Hultgren S.J."/>
            <person name="Gordon J.I."/>
        </authorList>
    </citation>
    <scope>NUCLEOTIDE SEQUENCE [LARGE SCALE GENOMIC DNA]</scope>
    <source>
        <strain>UTI89 / UPEC</strain>
    </source>
</reference>
<reference key="2">
    <citation type="journal article" date="2007" name="FEBS Lett.">
        <title>Substrate spectrum of L-rhamnulose kinase related to models derived from two ternary complex structures.</title>
        <authorList>
            <person name="Grueninger D."/>
            <person name="Schulz G.E."/>
        </authorList>
    </citation>
    <scope>X-RAY CRYSTALLOGRAPHY (1.55 ANGSTROMS) IN COMPLEX WITH SUBSTRATE ANALOG AND ADP</scope>
    <scope>FUNCTION</scope>
    <scope>CATALYTIC ACTIVITY</scope>
    <scope>ACTIVE SITE</scope>
    <scope>SUBUNIT</scope>
    <scope>SUBSTRATE SPECIFICITY</scope>
</reference>
<comment type="function">
    <text evidence="1 2">Involved in the catabolism of L-rhamnose (6-deoxy-L-mannose). It could also play a role in the metabolism of some rare sugars such as L-fructose. Catalyzes the transfer of the gamma-phosphate group from ATP to the 1-hydroxyl group of L-rhamnulose to yield L-rhamnulose 1-phosphate. It can also phosphorylate L-fuculose and L-xylulose. It requires the R-configuration at the C-3 atom.</text>
</comment>
<comment type="catalytic activity">
    <reaction evidence="1 2">
        <text>L-rhamnulose + ATP = L-rhamnulose 1-phosphate + ADP + H(+)</text>
        <dbReference type="Rhea" id="RHEA:20117"/>
        <dbReference type="ChEBI" id="CHEBI:15378"/>
        <dbReference type="ChEBI" id="CHEBI:17897"/>
        <dbReference type="ChEBI" id="CHEBI:30616"/>
        <dbReference type="ChEBI" id="CHEBI:58313"/>
        <dbReference type="ChEBI" id="CHEBI:456216"/>
        <dbReference type="EC" id="2.7.1.5"/>
    </reaction>
</comment>
<comment type="cofactor">
    <cofactor evidence="1">
        <name>Mg(2+)</name>
        <dbReference type="ChEBI" id="CHEBI:18420"/>
    </cofactor>
</comment>
<comment type="pathway">
    <text evidence="1">Carbohydrate degradation; L-rhamnose degradation; glycerone phosphate from L-rhamnose: step 2/3.</text>
</comment>
<comment type="subunit">
    <text evidence="1 2">Monomer.</text>
</comment>
<comment type="similarity">
    <text evidence="1">Belongs to the rhamnulokinase family.</text>
</comment>
<evidence type="ECO:0000255" key="1">
    <source>
        <dbReference type="HAMAP-Rule" id="MF_01535"/>
    </source>
</evidence>
<evidence type="ECO:0000269" key="2">
    <source>
    </source>
</evidence>
<evidence type="ECO:0000303" key="3">
    <source>
    </source>
</evidence>
<evidence type="ECO:0007829" key="4">
    <source>
        <dbReference type="PDB" id="2UYT"/>
    </source>
</evidence>
<sequence>MTFRNCVAVDLGASSGRVMLARYERECRSLTLREIHRFNNGLHSQNGYVTWNVDSLESAIRLGLNKVCEEGIRIDSIGIDTWGVDFVLLDQQGQRVGLPVAYRDSRTNGLMAQAQQQLGKRDIYQRSGIQFLPFNTIYQLRALTEQQPELIPHIAHALLIPDYFSYRLTGKMNWEYTNATTTQLVNINSDDWDESLLAWSGANKAWFGRPTHPGNVIGHWICPQGNEIPVVAVASHDTASAVIASPLNGSRAAYLSSGTWSLMGFESQTPFTNDTALAANITNEGGAEGRYRVLKNIMGLWLLQRVLQERQINDLPALIAATQALPACRFIINPNDDRFINPDEMCSEIQAACRETAQPIPESDAELARCIFDSLALLYADVLHELAQLRGEDFSQLHIVGGGCQNTLLNQLCADACGIRVIAGPVEASTLGNIGIQLMTLDELNNVDDFRQVVSTTANLTTFTPNPDSEIAHYVAQIHSTRQTKELCA</sequence>
<dbReference type="EC" id="2.7.1.5" evidence="1 2"/>
<dbReference type="EMBL" id="CP000243">
    <property type="protein sequence ID" value="ABE09899.1"/>
    <property type="molecule type" value="Genomic_DNA"/>
</dbReference>
<dbReference type="RefSeq" id="WP_000144110.1">
    <property type="nucleotide sequence ID" value="NZ_CP064825.1"/>
</dbReference>
<dbReference type="PDB" id="2UYT">
    <property type="method" value="X-ray"/>
    <property type="resolution" value="1.55 A"/>
    <property type="chains" value="A=1-489"/>
</dbReference>
<dbReference type="PDBsum" id="2UYT"/>
<dbReference type="SMR" id="Q1R415"/>
<dbReference type="KEGG" id="eci:UTI89_C4487"/>
<dbReference type="HOGENOM" id="CLU_039395_0_0_6"/>
<dbReference type="UniPathway" id="UPA00541">
    <property type="reaction ID" value="UER00602"/>
</dbReference>
<dbReference type="EvolutionaryTrace" id="Q1R415"/>
<dbReference type="Proteomes" id="UP000001952">
    <property type="component" value="Chromosome"/>
</dbReference>
<dbReference type="GO" id="GO:0005829">
    <property type="term" value="C:cytosol"/>
    <property type="evidence" value="ECO:0007669"/>
    <property type="project" value="TreeGrafter"/>
</dbReference>
<dbReference type="GO" id="GO:0005524">
    <property type="term" value="F:ATP binding"/>
    <property type="evidence" value="ECO:0000314"/>
    <property type="project" value="UniProtKB"/>
</dbReference>
<dbReference type="GO" id="GO:0004370">
    <property type="term" value="F:glycerol kinase activity"/>
    <property type="evidence" value="ECO:0007669"/>
    <property type="project" value="TreeGrafter"/>
</dbReference>
<dbReference type="GO" id="GO:0008993">
    <property type="term" value="F:rhamnulokinase activity"/>
    <property type="evidence" value="ECO:0000314"/>
    <property type="project" value="UniProtKB"/>
</dbReference>
<dbReference type="GO" id="GO:0006071">
    <property type="term" value="P:glycerol metabolic process"/>
    <property type="evidence" value="ECO:0007669"/>
    <property type="project" value="TreeGrafter"/>
</dbReference>
<dbReference type="GO" id="GO:0019301">
    <property type="term" value="P:rhamnose catabolic process"/>
    <property type="evidence" value="ECO:0000314"/>
    <property type="project" value="UniProtKB"/>
</dbReference>
<dbReference type="CDD" id="cd07771">
    <property type="entry name" value="ASKHA_NBD_FGGY_RhaB-like"/>
    <property type="match status" value="1"/>
</dbReference>
<dbReference type="FunFam" id="3.30.420.40:FF:000064">
    <property type="entry name" value="Rhamnulokinase"/>
    <property type="match status" value="1"/>
</dbReference>
<dbReference type="FunFam" id="3.30.420.40:FF:000073">
    <property type="entry name" value="Rhamnulokinase"/>
    <property type="match status" value="1"/>
</dbReference>
<dbReference type="Gene3D" id="3.30.420.40">
    <property type="match status" value="2"/>
</dbReference>
<dbReference type="HAMAP" id="MF_01535">
    <property type="entry name" value="Rhamnulokinase"/>
    <property type="match status" value="1"/>
</dbReference>
<dbReference type="InterPro" id="IPR043129">
    <property type="entry name" value="ATPase_NBD"/>
</dbReference>
<dbReference type="InterPro" id="IPR018485">
    <property type="entry name" value="FGGY_C"/>
</dbReference>
<dbReference type="InterPro" id="IPR018484">
    <property type="entry name" value="FGGY_N"/>
</dbReference>
<dbReference type="InterPro" id="IPR013449">
    <property type="entry name" value="Rhamnulokinase"/>
</dbReference>
<dbReference type="NCBIfam" id="NF007925">
    <property type="entry name" value="PRK10640.1"/>
    <property type="match status" value="1"/>
</dbReference>
<dbReference type="NCBIfam" id="TIGR02627">
    <property type="entry name" value="rhamnulo_kin"/>
    <property type="match status" value="1"/>
</dbReference>
<dbReference type="PANTHER" id="PTHR10196:SF93">
    <property type="entry name" value="L-RHAMNULOKINASE"/>
    <property type="match status" value="1"/>
</dbReference>
<dbReference type="PANTHER" id="PTHR10196">
    <property type="entry name" value="SUGAR KINASE"/>
    <property type="match status" value="1"/>
</dbReference>
<dbReference type="Pfam" id="PF02782">
    <property type="entry name" value="FGGY_C"/>
    <property type="match status" value="1"/>
</dbReference>
<dbReference type="Pfam" id="PF00370">
    <property type="entry name" value="FGGY_N"/>
    <property type="match status" value="1"/>
</dbReference>
<dbReference type="SUPFAM" id="SSF53067">
    <property type="entry name" value="Actin-like ATPase domain"/>
    <property type="match status" value="2"/>
</dbReference>
<accession>Q1R415</accession>
<proteinExistence type="evidence at protein level"/>
<organism>
    <name type="scientific">Escherichia coli (strain UTI89 / UPEC)</name>
    <dbReference type="NCBI Taxonomy" id="364106"/>
    <lineage>
        <taxon>Bacteria</taxon>
        <taxon>Pseudomonadati</taxon>
        <taxon>Pseudomonadota</taxon>
        <taxon>Gammaproteobacteria</taxon>
        <taxon>Enterobacterales</taxon>
        <taxon>Enterobacteriaceae</taxon>
        <taxon>Escherichia</taxon>
    </lineage>
</organism>
<name>RHAB_ECOUT</name>